<proteinExistence type="inferred from homology"/>
<reference key="1">
    <citation type="journal article" date="2010" name="Genome Biol. Evol.">
        <title>Continuing evolution of Burkholderia mallei through genome reduction and large-scale rearrangements.</title>
        <authorList>
            <person name="Losada L."/>
            <person name="Ronning C.M."/>
            <person name="DeShazer D."/>
            <person name="Woods D."/>
            <person name="Fedorova N."/>
            <person name="Kim H.S."/>
            <person name="Shabalina S.A."/>
            <person name="Pearson T.R."/>
            <person name="Brinkac L."/>
            <person name="Tan P."/>
            <person name="Nandi T."/>
            <person name="Crabtree J."/>
            <person name="Badger J."/>
            <person name="Beckstrom-Sternberg S."/>
            <person name="Saqib M."/>
            <person name="Schutzer S.E."/>
            <person name="Keim P."/>
            <person name="Nierman W.C."/>
        </authorList>
    </citation>
    <scope>NUCLEOTIDE SEQUENCE [LARGE SCALE GENOMIC DNA]</scope>
    <source>
        <strain>NCTC 10247</strain>
    </source>
</reference>
<organism>
    <name type="scientific">Burkholderia mallei (strain NCTC 10247)</name>
    <dbReference type="NCBI Taxonomy" id="320389"/>
    <lineage>
        <taxon>Bacteria</taxon>
        <taxon>Pseudomonadati</taxon>
        <taxon>Pseudomonadota</taxon>
        <taxon>Betaproteobacteria</taxon>
        <taxon>Burkholderiales</taxon>
        <taxon>Burkholderiaceae</taxon>
        <taxon>Burkholderia</taxon>
        <taxon>pseudomallei group</taxon>
    </lineage>
</organism>
<comment type="function">
    <text evidence="1">Binds to 23S rRNA. Forms part of two intersubunit bridges in the 70S ribosome.</text>
</comment>
<comment type="subunit">
    <text evidence="1">Part of the 50S ribosomal subunit. Forms a cluster with proteins L3 and L19. In the 70S ribosome, L14 and L19 interact and together make contacts with the 16S rRNA in bridges B5 and B8.</text>
</comment>
<comment type="similarity">
    <text evidence="1">Belongs to the universal ribosomal protein uL14 family.</text>
</comment>
<evidence type="ECO:0000255" key="1">
    <source>
        <dbReference type="HAMAP-Rule" id="MF_01367"/>
    </source>
</evidence>
<evidence type="ECO:0000305" key="2"/>
<accession>A3MRW4</accession>
<dbReference type="EMBL" id="CP000548">
    <property type="protein sequence ID" value="ABO03946.1"/>
    <property type="molecule type" value="Genomic_DNA"/>
</dbReference>
<dbReference type="RefSeq" id="WP_004197951.1">
    <property type="nucleotide sequence ID" value="NZ_CP007802.1"/>
</dbReference>
<dbReference type="SMR" id="A3MRW4"/>
<dbReference type="GeneID" id="93171007"/>
<dbReference type="KEGG" id="bmaz:BM44_3031"/>
<dbReference type="KEGG" id="bmn:BMA10247_3488"/>
<dbReference type="PATRIC" id="fig|320389.8.peg.3403"/>
<dbReference type="GO" id="GO:0022625">
    <property type="term" value="C:cytosolic large ribosomal subunit"/>
    <property type="evidence" value="ECO:0007669"/>
    <property type="project" value="TreeGrafter"/>
</dbReference>
<dbReference type="GO" id="GO:0070180">
    <property type="term" value="F:large ribosomal subunit rRNA binding"/>
    <property type="evidence" value="ECO:0007669"/>
    <property type="project" value="TreeGrafter"/>
</dbReference>
<dbReference type="GO" id="GO:0003735">
    <property type="term" value="F:structural constituent of ribosome"/>
    <property type="evidence" value="ECO:0007669"/>
    <property type="project" value="InterPro"/>
</dbReference>
<dbReference type="GO" id="GO:0006412">
    <property type="term" value="P:translation"/>
    <property type="evidence" value="ECO:0007669"/>
    <property type="project" value="UniProtKB-UniRule"/>
</dbReference>
<dbReference type="CDD" id="cd00337">
    <property type="entry name" value="Ribosomal_uL14"/>
    <property type="match status" value="1"/>
</dbReference>
<dbReference type="FunFam" id="2.40.150.20:FF:000001">
    <property type="entry name" value="50S ribosomal protein L14"/>
    <property type="match status" value="1"/>
</dbReference>
<dbReference type="Gene3D" id="2.40.150.20">
    <property type="entry name" value="Ribosomal protein L14"/>
    <property type="match status" value="1"/>
</dbReference>
<dbReference type="HAMAP" id="MF_01367">
    <property type="entry name" value="Ribosomal_uL14"/>
    <property type="match status" value="1"/>
</dbReference>
<dbReference type="InterPro" id="IPR000218">
    <property type="entry name" value="Ribosomal_uL14"/>
</dbReference>
<dbReference type="InterPro" id="IPR005745">
    <property type="entry name" value="Ribosomal_uL14_bac-type"/>
</dbReference>
<dbReference type="InterPro" id="IPR019972">
    <property type="entry name" value="Ribosomal_uL14_CS"/>
</dbReference>
<dbReference type="InterPro" id="IPR036853">
    <property type="entry name" value="Ribosomal_uL14_sf"/>
</dbReference>
<dbReference type="NCBIfam" id="TIGR01067">
    <property type="entry name" value="rplN_bact"/>
    <property type="match status" value="1"/>
</dbReference>
<dbReference type="PANTHER" id="PTHR11761">
    <property type="entry name" value="50S/60S RIBOSOMAL PROTEIN L14/L23"/>
    <property type="match status" value="1"/>
</dbReference>
<dbReference type="PANTHER" id="PTHR11761:SF3">
    <property type="entry name" value="LARGE RIBOSOMAL SUBUNIT PROTEIN UL14M"/>
    <property type="match status" value="1"/>
</dbReference>
<dbReference type="Pfam" id="PF00238">
    <property type="entry name" value="Ribosomal_L14"/>
    <property type="match status" value="1"/>
</dbReference>
<dbReference type="SMART" id="SM01374">
    <property type="entry name" value="Ribosomal_L14"/>
    <property type="match status" value="1"/>
</dbReference>
<dbReference type="SUPFAM" id="SSF50193">
    <property type="entry name" value="Ribosomal protein L14"/>
    <property type="match status" value="1"/>
</dbReference>
<dbReference type="PROSITE" id="PS00049">
    <property type="entry name" value="RIBOSOMAL_L14"/>
    <property type="match status" value="1"/>
</dbReference>
<gene>
    <name evidence="1" type="primary">rplN</name>
    <name type="ordered locus">BMA10247_3488</name>
</gene>
<keyword id="KW-0687">Ribonucleoprotein</keyword>
<keyword id="KW-0689">Ribosomal protein</keyword>
<keyword id="KW-0694">RNA-binding</keyword>
<keyword id="KW-0699">rRNA-binding</keyword>
<sequence>MIQTESRLEVADNTGAREVMCIKVLGGSKRRYASIGDIIKVSVKEATPRGRVKKGEIYNAVVVRTAKGVRRQDGSLIKFDGNAAVLLNNKLEPIGTRIFGPVTRELRSERFMKIVSLAPEVL</sequence>
<feature type="chain" id="PRO_1000055533" description="Large ribosomal subunit protein uL14">
    <location>
        <begin position="1"/>
        <end position="122"/>
    </location>
</feature>
<name>RL14_BURM7</name>
<protein>
    <recommendedName>
        <fullName evidence="1">Large ribosomal subunit protein uL14</fullName>
    </recommendedName>
    <alternativeName>
        <fullName evidence="2">50S ribosomal protein L14</fullName>
    </alternativeName>
</protein>